<keyword id="KW-1185">Reference proteome</keyword>
<keyword id="KW-0687">Ribonucleoprotein</keyword>
<keyword id="KW-0689">Ribosomal protein</keyword>
<proteinExistence type="inferred from homology"/>
<evidence type="ECO:0000255" key="1">
    <source>
        <dbReference type="HAMAP-Rule" id="MF_00539"/>
    </source>
</evidence>
<evidence type="ECO:0000256" key="2">
    <source>
        <dbReference type="SAM" id="MobiDB-lite"/>
    </source>
</evidence>
<evidence type="ECO:0000305" key="3"/>
<sequence length="88" mass="9508">MAHKKGASSSSNGRDSEAKRLGVKRFGGQQVNAGEILVRQRGTKFHPGENVGRGGDDTLFALKAGAVEFITKRNRRLVNIVENETVDA</sequence>
<name>RL27_CORDI</name>
<organism>
    <name type="scientific">Corynebacterium diphtheriae (strain ATCC 700971 / NCTC 13129 / Biotype gravis)</name>
    <dbReference type="NCBI Taxonomy" id="257309"/>
    <lineage>
        <taxon>Bacteria</taxon>
        <taxon>Bacillati</taxon>
        <taxon>Actinomycetota</taxon>
        <taxon>Actinomycetes</taxon>
        <taxon>Mycobacteriales</taxon>
        <taxon>Corynebacteriaceae</taxon>
        <taxon>Corynebacterium</taxon>
    </lineage>
</organism>
<dbReference type="EMBL" id="BX248359">
    <property type="protein sequence ID" value="CAE50310.1"/>
    <property type="molecule type" value="Genomic_DNA"/>
</dbReference>
<dbReference type="RefSeq" id="WP_003852453.1">
    <property type="nucleotide sequence ID" value="NC_002935.2"/>
</dbReference>
<dbReference type="SMR" id="Q6NFV6"/>
<dbReference type="STRING" id="257309.DIP1780"/>
<dbReference type="GeneID" id="97332650"/>
<dbReference type="KEGG" id="cdi:DIP1780"/>
<dbReference type="HOGENOM" id="CLU_095424_4_0_11"/>
<dbReference type="Proteomes" id="UP000002198">
    <property type="component" value="Chromosome"/>
</dbReference>
<dbReference type="GO" id="GO:0022625">
    <property type="term" value="C:cytosolic large ribosomal subunit"/>
    <property type="evidence" value="ECO:0007669"/>
    <property type="project" value="TreeGrafter"/>
</dbReference>
<dbReference type="GO" id="GO:0003735">
    <property type="term" value="F:structural constituent of ribosome"/>
    <property type="evidence" value="ECO:0007669"/>
    <property type="project" value="InterPro"/>
</dbReference>
<dbReference type="GO" id="GO:0006412">
    <property type="term" value="P:translation"/>
    <property type="evidence" value="ECO:0007669"/>
    <property type="project" value="UniProtKB-UniRule"/>
</dbReference>
<dbReference type="FunFam" id="2.40.50.100:FF:000020">
    <property type="entry name" value="50S ribosomal protein L27"/>
    <property type="match status" value="1"/>
</dbReference>
<dbReference type="Gene3D" id="2.40.50.100">
    <property type="match status" value="1"/>
</dbReference>
<dbReference type="HAMAP" id="MF_00539">
    <property type="entry name" value="Ribosomal_bL27"/>
    <property type="match status" value="1"/>
</dbReference>
<dbReference type="InterPro" id="IPR001684">
    <property type="entry name" value="Ribosomal_bL27"/>
</dbReference>
<dbReference type="InterPro" id="IPR018261">
    <property type="entry name" value="Ribosomal_bL27_CS"/>
</dbReference>
<dbReference type="NCBIfam" id="TIGR00062">
    <property type="entry name" value="L27"/>
    <property type="match status" value="1"/>
</dbReference>
<dbReference type="PANTHER" id="PTHR15893:SF0">
    <property type="entry name" value="LARGE RIBOSOMAL SUBUNIT PROTEIN BL27M"/>
    <property type="match status" value="1"/>
</dbReference>
<dbReference type="PANTHER" id="PTHR15893">
    <property type="entry name" value="RIBOSOMAL PROTEIN L27"/>
    <property type="match status" value="1"/>
</dbReference>
<dbReference type="Pfam" id="PF01016">
    <property type="entry name" value="Ribosomal_L27"/>
    <property type="match status" value="1"/>
</dbReference>
<dbReference type="PRINTS" id="PR00063">
    <property type="entry name" value="RIBOSOMALL27"/>
</dbReference>
<dbReference type="SUPFAM" id="SSF110324">
    <property type="entry name" value="Ribosomal L27 protein-like"/>
    <property type="match status" value="1"/>
</dbReference>
<dbReference type="PROSITE" id="PS00831">
    <property type="entry name" value="RIBOSOMAL_L27"/>
    <property type="match status" value="1"/>
</dbReference>
<gene>
    <name evidence="1" type="primary">rpmA</name>
    <name type="ordered locus">DIP1780</name>
</gene>
<comment type="similarity">
    <text evidence="1">Belongs to the bacterial ribosomal protein bL27 family.</text>
</comment>
<reference key="1">
    <citation type="journal article" date="2003" name="Nucleic Acids Res.">
        <title>The complete genome sequence and analysis of Corynebacterium diphtheriae NCTC13129.</title>
        <authorList>
            <person name="Cerdeno-Tarraga A.-M."/>
            <person name="Efstratiou A."/>
            <person name="Dover L.G."/>
            <person name="Holden M.T.G."/>
            <person name="Pallen M.J."/>
            <person name="Bentley S.D."/>
            <person name="Besra G.S."/>
            <person name="Churcher C.M."/>
            <person name="James K.D."/>
            <person name="De Zoysa A."/>
            <person name="Chillingworth T."/>
            <person name="Cronin A."/>
            <person name="Dowd L."/>
            <person name="Feltwell T."/>
            <person name="Hamlin N."/>
            <person name="Holroyd S."/>
            <person name="Jagels K."/>
            <person name="Moule S."/>
            <person name="Quail M.A."/>
            <person name="Rabbinowitsch E."/>
            <person name="Rutherford K.M."/>
            <person name="Thomson N.R."/>
            <person name="Unwin L."/>
            <person name="Whitehead S."/>
            <person name="Barrell B.G."/>
            <person name="Parkhill J."/>
        </authorList>
    </citation>
    <scope>NUCLEOTIDE SEQUENCE [LARGE SCALE GENOMIC DNA]</scope>
    <source>
        <strain>ATCC 700971 / NCTC 13129 / Biotype gravis</strain>
    </source>
</reference>
<feature type="chain" id="PRO_0000181078" description="Large ribosomal subunit protein bL27">
    <location>
        <begin position="1"/>
        <end position="88"/>
    </location>
</feature>
<feature type="region of interest" description="Disordered" evidence="2">
    <location>
        <begin position="1"/>
        <end position="25"/>
    </location>
</feature>
<protein>
    <recommendedName>
        <fullName evidence="1">Large ribosomal subunit protein bL27</fullName>
    </recommendedName>
    <alternativeName>
        <fullName evidence="3">50S ribosomal protein L27</fullName>
    </alternativeName>
</protein>
<accession>Q6NFV6</accession>